<proteinExistence type="inferred from homology"/>
<keyword id="KW-0238">DNA-binding</keyword>
<keyword id="KW-0677">Repeat</keyword>
<keyword id="KW-0804">Transcription</keyword>
<keyword id="KW-0805">Transcription regulation</keyword>
<feature type="chain" id="PRO_1000049887" description="TATA-box-binding protein">
    <location>
        <begin position="1"/>
        <end position="199"/>
    </location>
</feature>
<feature type="repeat" description="1">
    <location>
        <begin position="10"/>
        <end position="86"/>
    </location>
</feature>
<feature type="repeat" description="2">
    <location>
        <begin position="101"/>
        <end position="177"/>
    </location>
</feature>
<name>TBP_PYRIL</name>
<reference key="1">
    <citation type="submission" date="2006-12" db="EMBL/GenBank/DDBJ databases">
        <title>Complete sequence of Pyrobaculum islandicum DSM 4184.</title>
        <authorList>
            <person name="Copeland A."/>
            <person name="Lucas S."/>
            <person name="Lapidus A."/>
            <person name="Barry K."/>
            <person name="Detter J.C."/>
            <person name="Glavina del Rio T."/>
            <person name="Dalin E."/>
            <person name="Tice H."/>
            <person name="Pitluck S."/>
            <person name="Meincke L."/>
            <person name="Brettin T."/>
            <person name="Bruce D."/>
            <person name="Han C."/>
            <person name="Tapia R."/>
            <person name="Gilna P."/>
            <person name="Schmutz J."/>
            <person name="Larimer F."/>
            <person name="Land M."/>
            <person name="Hauser L."/>
            <person name="Kyrpides N."/>
            <person name="Mikhailova N."/>
            <person name="Cozen A.E."/>
            <person name="Fitz-Gibbon S.T."/>
            <person name="House C.H."/>
            <person name="Saltikov C."/>
            <person name="Lowe T."/>
            <person name="Richardson P."/>
        </authorList>
    </citation>
    <scope>NUCLEOTIDE SEQUENCE [LARGE SCALE GENOMIC DNA]</scope>
    <source>
        <strain>DSM 4184 / JCM 9189 / GEO3</strain>
    </source>
</reference>
<accession>A1RSQ1</accession>
<sequence length="199" mass="22034">MESGGPTYRIENIVATVNLGVELDLEKLAERLAMAEYNPDQFPGLILRLTKPRISALIFRTGKMVCTGAKNEEDLKNAVRALVKLLRDHGAEVPFDPEVQVQNIVASGNLHAEVDLEQAVLMLENAMYEPEQFPGLIYRMSSPRVVMLIFGSGKIVCTGAKSERDVATAVQKLYNQLKDLGVLYIEEGGGEEEEELEEL</sequence>
<gene>
    <name evidence="1" type="primary">tbp</name>
    <name type="ordered locus">Pisl_0807</name>
</gene>
<evidence type="ECO:0000255" key="1">
    <source>
        <dbReference type="HAMAP-Rule" id="MF_00408"/>
    </source>
</evidence>
<protein>
    <recommendedName>
        <fullName evidence="1">TATA-box-binding protein</fullName>
    </recommendedName>
    <alternativeName>
        <fullName evidence="1">Box A-binding protein</fullName>
        <shortName evidence="1">BAP</shortName>
    </alternativeName>
    <alternativeName>
        <fullName evidence="1">TATA sequence-binding protein</fullName>
        <shortName evidence="1">TBP</shortName>
    </alternativeName>
    <alternativeName>
        <fullName evidence="1">TATA-box factor</fullName>
    </alternativeName>
</protein>
<comment type="function">
    <text evidence="1">General factor that plays a role in the activation of archaeal genes transcribed by RNA polymerase. Binds specifically to the TATA box promoter element which lies close to the position of transcription initiation.</text>
</comment>
<comment type="similarity">
    <text evidence="1">Belongs to the TBP family.</text>
</comment>
<organism>
    <name type="scientific">Pyrobaculum islandicum (strain DSM 4184 / JCM 9189 / GEO3)</name>
    <dbReference type="NCBI Taxonomy" id="384616"/>
    <lineage>
        <taxon>Archaea</taxon>
        <taxon>Thermoproteota</taxon>
        <taxon>Thermoprotei</taxon>
        <taxon>Thermoproteales</taxon>
        <taxon>Thermoproteaceae</taxon>
        <taxon>Pyrobaculum</taxon>
    </lineage>
</organism>
<dbReference type="EMBL" id="CP000504">
    <property type="protein sequence ID" value="ABL87983.1"/>
    <property type="molecule type" value="Genomic_DNA"/>
</dbReference>
<dbReference type="RefSeq" id="WP_011762559.1">
    <property type="nucleotide sequence ID" value="NC_008701.1"/>
</dbReference>
<dbReference type="SMR" id="A1RSQ1"/>
<dbReference type="STRING" id="384616.Pisl_0807"/>
<dbReference type="GeneID" id="4617268"/>
<dbReference type="KEGG" id="pis:Pisl_0807"/>
<dbReference type="eggNOG" id="arCOG01764">
    <property type="taxonomic scope" value="Archaea"/>
</dbReference>
<dbReference type="HOGENOM" id="CLU_060161_4_3_2"/>
<dbReference type="OrthoDB" id="350539at2157"/>
<dbReference type="Proteomes" id="UP000002595">
    <property type="component" value="Chromosome"/>
</dbReference>
<dbReference type="GO" id="GO:0003677">
    <property type="term" value="F:DNA binding"/>
    <property type="evidence" value="ECO:0007669"/>
    <property type="project" value="UniProtKB-KW"/>
</dbReference>
<dbReference type="GO" id="GO:0003700">
    <property type="term" value="F:DNA-binding transcription factor activity"/>
    <property type="evidence" value="ECO:0007669"/>
    <property type="project" value="UniProtKB-UniRule"/>
</dbReference>
<dbReference type="GO" id="GO:0006352">
    <property type="term" value="P:DNA-templated transcription initiation"/>
    <property type="evidence" value="ECO:0007669"/>
    <property type="project" value="InterPro"/>
</dbReference>
<dbReference type="CDD" id="cd04518">
    <property type="entry name" value="TBP_archaea"/>
    <property type="match status" value="1"/>
</dbReference>
<dbReference type="FunFam" id="3.30.310.10:FF:000007">
    <property type="entry name" value="TATA-box-binding protein"/>
    <property type="match status" value="1"/>
</dbReference>
<dbReference type="FunFam" id="3.30.310.10:FF:000010">
    <property type="entry name" value="TATA-box-binding protein"/>
    <property type="match status" value="1"/>
</dbReference>
<dbReference type="Gene3D" id="3.30.310.10">
    <property type="entry name" value="TATA-Binding Protein"/>
    <property type="match status" value="2"/>
</dbReference>
<dbReference type="HAMAP" id="MF_00408">
    <property type="entry name" value="TATA_bind_prot_arch"/>
    <property type="match status" value="1"/>
</dbReference>
<dbReference type="InterPro" id="IPR000814">
    <property type="entry name" value="TBP"/>
</dbReference>
<dbReference type="InterPro" id="IPR033711">
    <property type="entry name" value="TBP_archaea"/>
</dbReference>
<dbReference type="InterPro" id="IPR030491">
    <property type="entry name" value="TBP_CS"/>
</dbReference>
<dbReference type="InterPro" id="IPR012295">
    <property type="entry name" value="TBP_dom_sf"/>
</dbReference>
<dbReference type="NCBIfam" id="NF001592">
    <property type="entry name" value="PRK00394.1-1"/>
    <property type="match status" value="1"/>
</dbReference>
<dbReference type="NCBIfam" id="NF001593">
    <property type="entry name" value="PRK00394.1-2"/>
    <property type="match status" value="1"/>
</dbReference>
<dbReference type="PANTHER" id="PTHR10126">
    <property type="entry name" value="TATA-BOX BINDING PROTEIN"/>
    <property type="match status" value="1"/>
</dbReference>
<dbReference type="Pfam" id="PF00352">
    <property type="entry name" value="TBP"/>
    <property type="match status" value="2"/>
</dbReference>
<dbReference type="PRINTS" id="PR00686">
    <property type="entry name" value="TIFACTORIID"/>
</dbReference>
<dbReference type="SUPFAM" id="SSF55945">
    <property type="entry name" value="TATA-box binding protein-like"/>
    <property type="match status" value="2"/>
</dbReference>
<dbReference type="PROSITE" id="PS00351">
    <property type="entry name" value="TFIID"/>
    <property type="match status" value="2"/>
</dbReference>